<proteinExistence type="inferred from homology"/>
<comment type="function">
    <text evidence="1">Involved in the biosynthesis of lipid A, a phosphorylated glycolipid that anchors the lipopolysaccharide to the outer membrane of the cell.</text>
</comment>
<comment type="catalytic activity">
    <reaction evidence="1">
        <text>a (3R)-hydroxyacyl-[ACP] + UDP-N-acetyl-alpha-D-glucosamine = a UDP-3-O-[(3R)-3-hydroxyacyl]-N-acetyl-alpha-D-glucosamine + holo-[ACP]</text>
        <dbReference type="Rhea" id="RHEA:67812"/>
        <dbReference type="Rhea" id="RHEA-COMP:9685"/>
        <dbReference type="Rhea" id="RHEA-COMP:9945"/>
        <dbReference type="ChEBI" id="CHEBI:57705"/>
        <dbReference type="ChEBI" id="CHEBI:64479"/>
        <dbReference type="ChEBI" id="CHEBI:78827"/>
        <dbReference type="ChEBI" id="CHEBI:173225"/>
        <dbReference type="EC" id="2.3.1.129"/>
    </reaction>
</comment>
<comment type="pathway">
    <text evidence="1">Glycolipid biosynthesis; lipid IV(A) biosynthesis; lipid IV(A) from (3R)-3-hydroxytetradecanoyl-[acyl-carrier-protein] and UDP-N-acetyl-alpha-D-glucosamine: step 1/6.</text>
</comment>
<comment type="subunit">
    <text evidence="1">Homotrimer.</text>
</comment>
<comment type="subcellular location">
    <subcellularLocation>
        <location evidence="1">Cytoplasm</location>
    </subcellularLocation>
</comment>
<comment type="similarity">
    <text evidence="1">Belongs to the transferase hexapeptide repeat family. LpxA subfamily.</text>
</comment>
<protein>
    <recommendedName>
        <fullName evidence="1">Acyl-[acyl-carrier-protein]--UDP-N-acetylglucosamine O-acyltransferase</fullName>
        <shortName evidence="1">UDP-N-acetylglucosamine acyltransferase</shortName>
        <ecNumber evidence="1">2.3.1.129</ecNumber>
    </recommendedName>
</protein>
<sequence length="262" mass="28024">MIDKSAFVHPTAIVEEGASIGANAHIGPFCIVGPHVGIGEGTVLKSHVVVNGHTKIGRDNEIYQFASIGEVNQDLKYAGEPTRVEIGDRNRIRESVTIHRGTVQGGGLTKVGSDNLLMINAHIAHDCTVGNRCILANNATLAGHVSVDDFAIIGGMTAVHQFCIIGAHVMVGGCSGVAQDVPPYVIAQGNHATPFGVNIEGLKRRGFSREAITAIRNAYKLIYRSGKTLDEVKPEIAELAETYPEVKAFTDFFSRSTRGLIR</sequence>
<evidence type="ECO:0000255" key="1">
    <source>
        <dbReference type="HAMAP-Rule" id="MF_00387"/>
    </source>
</evidence>
<name>LPXA_SHIBS</name>
<organism>
    <name type="scientific">Shigella boydii serotype 4 (strain Sb227)</name>
    <dbReference type="NCBI Taxonomy" id="300268"/>
    <lineage>
        <taxon>Bacteria</taxon>
        <taxon>Pseudomonadati</taxon>
        <taxon>Pseudomonadota</taxon>
        <taxon>Gammaproteobacteria</taxon>
        <taxon>Enterobacterales</taxon>
        <taxon>Enterobacteriaceae</taxon>
        <taxon>Shigella</taxon>
    </lineage>
</organism>
<keyword id="KW-0012">Acyltransferase</keyword>
<keyword id="KW-0963">Cytoplasm</keyword>
<keyword id="KW-0441">Lipid A biosynthesis</keyword>
<keyword id="KW-0444">Lipid biosynthesis</keyword>
<keyword id="KW-0443">Lipid metabolism</keyword>
<keyword id="KW-0677">Repeat</keyword>
<keyword id="KW-0808">Transferase</keyword>
<dbReference type="EC" id="2.3.1.129" evidence="1"/>
<dbReference type="EMBL" id="CP000036">
    <property type="protein sequence ID" value="ABB64899.1"/>
    <property type="molecule type" value="Genomic_DNA"/>
</dbReference>
<dbReference type="RefSeq" id="WP_000565978.1">
    <property type="nucleotide sequence ID" value="NC_007613.1"/>
</dbReference>
<dbReference type="SMR" id="Q325V9"/>
<dbReference type="KEGG" id="sbo:SBO_0169"/>
<dbReference type="HOGENOM" id="CLU_061249_0_0_6"/>
<dbReference type="UniPathway" id="UPA00359">
    <property type="reaction ID" value="UER00477"/>
</dbReference>
<dbReference type="Proteomes" id="UP000007067">
    <property type="component" value="Chromosome"/>
</dbReference>
<dbReference type="GO" id="GO:0005737">
    <property type="term" value="C:cytoplasm"/>
    <property type="evidence" value="ECO:0007669"/>
    <property type="project" value="UniProtKB-SubCell"/>
</dbReference>
<dbReference type="GO" id="GO:0016020">
    <property type="term" value="C:membrane"/>
    <property type="evidence" value="ECO:0007669"/>
    <property type="project" value="GOC"/>
</dbReference>
<dbReference type="GO" id="GO:0008780">
    <property type="term" value="F:acyl-[acyl-carrier-protein]-UDP-N-acetylglucosamine O-acyltransferase activity"/>
    <property type="evidence" value="ECO:0007669"/>
    <property type="project" value="UniProtKB-UniRule"/>
</dbReference>
<dbReference type="GO" id="GO:0009245">
    <property type="term" value="P:lipid A biosynthetic process"/>
    <property type="evidence" value="ECO:0007669"/>
    <property type="project" value="UniProtKB-UniRule"/>
</dbReference>
<dbReference type="CDD" id="cd03351">
    <property type="entry name" value="LbH_UDP-GlcNAc_AT"/>
    <property type="match status" value="1"/>
</dbReference>
<dbReference type="FunFam" id="1.20.1180.10:FF:000001">
    <property type="entry name" value="Acyl-[acyl-carrier-protein]--UDP-N-acetylglucosamine O-acyltransferase"/>
    <property type="match status" value="1"/>
</dbReference>
<dbReference type="FunFam" id="2.160.10.10:FF:000003">
    <property type="entry name" value="Acyl-[acyl-carrier-protein]--UDP-N-acetylglucosamine O-acyltransferase"/>
    <property type="match status" value="1"/>
</dbReference>
<dbReference type="Gene3D" id="2.160.10.10">
    <property type="entry name" value="Hexapeptide repeat proteins"/>
    <property type="match status" value="1"/>
</dbReference>
<dbReference type="Gene3D" id="1.20.1180.10">
    <property type="entry name" value="Udp N-acetylglucosamine O-acyltransferase, C-terminal domain"/>
    <property type="match status" value="1"/>
</dbReference>
<dbReference type="HAMAP" id="MF_00387">
    <property type="entry name" value="LpxA"/>
    <property type="match status" value="1"/>
</dbReference>
<dbReference type="InterPro" id="IPR029098">
    <property type="entry name" value="Acetyltransf_C"/>
</dbReference>
<dbReference type="InterPro" id="IPR037157">
    <property type="entry name" value="Acetyltransf_C_sf"/>
</dbReference>
<dbReference type="InterPro" id="IPR001451">
    <property type="entry name" value="Hexapep"/>
</dbReference>
<dbReference type="InterPro" id="IPR018357">
    <property type="entry name" value="Hexapep_transf_CS"/>
</dbReference>
<dbReference type="InterPro" id="IPR010137">
    <property type="entry name" value="Lipid_A_LpxA"/>
</dbReference>
<dbReference type="InterPro" id="IPR011004">
    <property type="entry name" value="Trimer_LpxA-like_sf"/>
</dbReference>
<dbReference type="NCBIfam" id="TIGR01852">
    <property type="entry name" value="lipid_A_lpxA"/>
    <property type="match status" value="1"/>
</dbReference>
<dbReference type="NCBIfam" id="NF003657">
    <property type="entry name" value="PRK05289.1"/>
    <property type="match status" value="1"/>
</dbReference>
<dbReference type="PANTHER" id="PTHR43480">
    <property type="entry name" value="ACYL-[ACYL-CARRIER-PROTEIN]--UDP-N-ACETYLGLUCOSAMINE O-ACYLTRANSFERASE"/>
    <property type="match status" value="1"/>
</dbReference>
<dbReference type="PANTHER" id="PTHR43480:SF1">
    <property type="entry name" value="ACYL-[ACYL-CARRIER-PROTEIN]--UDP-N-ACETYLGLUCOSAMINE O-ACYLTRANSFERASE, MITOCHONDRIAL-RELATED"/>
    <property type="match status" value="1"/>
</dbReference>
<dbReference type="Pfam" id="PF13720">
    <property type="entry name" value="Acetyltransf_11"/>
    <property type="match status" value="1"/>
</dbReference>
<dbReference type="Pfam" id="PF00132">
    <property type="entry name" value="Hexapep"/>
    <property type="match status" value="2"/>
</dbReference>
<dbReference type="PIRSF" id="PIRSF000456">
    <property type="entry name" value="UDP-GlcNAc_acltr"/>
    <property type="match status" value="1"/>
</dbReference>
<dbReference type="SUPFAM" id="SSF51161">
    <property type="entry name" value="Trimeric LpxA-like enzymes"/>
    <property type="match status" value="1"/>
</dbReference>
<dbReference type="PROSITE" id="PS00101">
    <property type="entry name" value="HEXAPEP_TRANSFERASES"/>
    <property type="match status" value="2"/>
</dbReference>
<feature type="chain" id="PRO_0000302601" description="Acyl-[acyl-carrier-protein]--UDP-N-acetylglucosamine O-acyltransferase">
    <location>
        <begin position="1"/>
        <end position="262"/>
    </location>
</feature>
<gene>
    <name evidence="1" type="primary">lpxA</name>
    <name type="ordered locus">SBO_0169</name>
</gene>
<accession>Q325V9</accession>
<reference key="1">
    <citation type="journal article" date="2005" name="Nucleic Acids Res.">
        <title>Genome dynamics and diversity of Shigella species, the etiologic agents of bacillary dysentery.</title>
        <authorList>
            <person name="Yang F."/>
            <person name="Yang J."/>
            <person name="Zhang X."/>
            <person name="Chen L."/>
            <person name="Jiang Y."/>
            <person name="Yan Y."/>
            <person name="Tang X."/>
            <person name="Wang J."/>
            <person name="Xiong Z."/>
            <person name="Dong J."/>
            <person name="Xue Y."/>
            <person name="Zhu Y."/>
            <person name="Xu X."/>
            <person name="Sun L."/>
            <person name="Chen S."/>
            <person name="Nie H."/>
            <person name="Peng J."/>
            <person name="Xu J."/>
            <person name="Wang Y."/>
            <person name="Yuan Z."/>
            <person name="Wen Y."/>
            <person name="Yao Z."/>
            <person name="Shen Y."/>
            <person name="Qiang B."/>
            <person name="Hou Y."/>
            <person name="Yu J."/>
            <person name="Jin Q."/>
        </authorList>
    </citation>
    <scope>NUCLEOTIDE SEQUENCE [LARGE SCALE GENOMIC DNA]</scope>
    <source>
        <strain>Sb227</strain>
    </source>
</reference>